<gene>
    <name evidence="1" type="primary">aroK</name>
    <name type="ordered locus">PTH_1131</name>
</gene>
<evidence type="ECO:0000255" key="1">
    <source>
        <dbReference type="HAMAP-Rule" id="MF_00109"/>
    </source>
</evidence>
<name>AROK_PELTS</name>
<keyword id="KW-0028">Amino-acid biosynthesis</keyword>
<keyword id="KW-0057">Aromatic amino acid biosynthesis</keyword>
<keyword id="KW-0067">ATP-binding</keyword>
<keyword id="KW-0963">Cytoplasm</keyword>
<keyword id="KW-0418">Kinase</keyword>
<keyword id="KW-0460">Magnesium</keyword>
<keyword id="KW-0479">Metal-binding</keyword>
<keyword id="KW-0547">Nucleotide-binding</keyword>
<keyword id="KW-1185">Reference proteome</keyword>
<keyword id="KW-0808">Transferase</keyword>
<reference key="1">
    <citation type="journal article" date="2008" name="Genome Res.">
        <title>The genome of Pelotomaculum thermopropionicum reveals niche-associated evolution in anaerobic microbiota.</title>
        <authorList>
            <person name="Kosaka T."/>
            <person name="Kato S."/>
            <person name="Shimoyama T."/>
            <person name="Ishii S."/>
            <person name="Abe T."/>
            <person name="Watanabe K."/>
        </authorList>
    </citation>
    <scope>NUCLEOTIDE SEQUENCE [LARGE SCALE GENOMIC DNA]</scope>
    <source>
        <strain>DSM 13744 / JCM 10971 / SI</strain>
    </source>
</reference>
<proteinExistence type="inferred from homology"/>
<sequence>MKNIVLIGFMGTGKTAVGRRLAGRLKREFIDTDAEIEKVTGKTVAQIFARDGQIRFRSEEALLVRKLAGKENLVISTGGGMVLNPENVRLLKENGVLIALTADPEVICRRVKNKKNRPLLMRGDLRENIKALLKEREGVYDVAEHKVDTGSMSLDQAVENIIHFLKEHNYIE</sequence>
<protein>
    <recommendedName>
        <fullName evidence="1">Shikimate kinase</fullName>
        <shortName evidence="1">SK</shortName>
        <ecNumber evidence="1">2.7.1.71</ecNumber>
    </recommendedName>
</protein>
<comment type="function">
    <text evidence="1">Catalyzes the specific phosphorylation of the 3-hydroxyl group of shikimic acid using ATP as a cosubstrate.</text>
</comment>
<comment type="catalytic activity">
    <reaction evidence="1">
        <text>shikimate + ATP = 3-phosphoshikimate + ADP + H(+)</text>
        <dbReference type="Rhea" id="RHEA:13121"/>
        <dbReference type="ChEBI" id="CHEBI:15378"/>
        <dbReference type="ChEBI" id="CHEBI:30616"/>
        <dbReference type="ChEBI" id="CHEBI:36208"/>
        <dbReference type="ChEBI" id="CHEBI:145989"/>
        <dbReference type="ChEBI" id="CHEBI:456216"/>
        <dbReference type="EC" id="2.7.1.71"/>
    </reaction>
</comment>
<comment type="cofactor">
    <cofactor evidence="1">
        <name>Mg(2+)</name>
        <dbReference type="ChEBI" id="CHEBI:18420"/>
    </cofactor>
    <text evidence="1">Binds 1 Mg(2+) ion per subunit.</text>
</comment>
<comment type="pathway">
    <text evidence="1">Metabolic intermediate biosynthesis; chorismate biosynthesis; chorismate from D-erythrose 4-phosphate and phosphoenolpyruvate: step 5/7.</text>
</comment>
<comment type="subunit">
    <text evidence="1">Monomer.</text>
</comment>
<comment type="subcellular location">
    <subcellularLocation>
        <location evidence="1">Cytoplasm</location>
    </subcellularLocation>
</comment>
<comment type="similarity">
    <text evidence="1">Belongs to the shikimate kinase family.</text>
</comment>
<accession>A5D373</accession>
<feature type="chain" id="PRO_1000075954" description="Shikimate kinase">
    <location>
        <begin position="1"/>
        <end position="172"/>
    </location>
</feature>
<feature type="binding site" evidence="1">
    <location>
        <begin position="11"/>
        <end position="16"/>
    </location>
    <ligand>
        <name>ATP</name>
        <dbReference type="ChEBI" id="CHEBI:30616"/>
    </ligand>
</feature>
<feature type="binding site" evidence="1">
    <location>
        <position position="15"/>
    </location>
    <ligand>
        <name>Mg(2+)</name>
        <dbReference type="ChEBI" id="CHEBI:18420"/>
    </ligand>
</feature>
<feature type="binding site" evidence="1">
    <location>
        <position position="33"/>
    </location>
    <ligand>
        <name>substrate</name>
    </ligand>
</feature>
<feature type="binding site" evidence="1">
    <location>
        <position position="57"/>
    </location>
    <ligand>
        <name>substrate</name>
    </ligand>
</feature>
<feature type="binding site" evidence="1">
    <location>
        <position position="79"/>
    </location>
    <ligand>
        <name>substrate</name>
    </ligand>
</feature>
<feature type="binding site" evidence="1">
    <location>
        <position position="117"/>
    </location>
    <ligand>
        <name>ATP</name>
        <dbReference type="ChEBI" id="CHEBI:30616"/>
    </ligand>
</feature>
<feature type="binding site" evidence="1">
    <location>
        <position position="136"/>
    </location>
    <ligand>
        <name>substrate</name>
    </ligand>
</feature>
<organism>
    <name type="scientific">Pelotomaculum thermopropionicum (strain DSM 13744 / JCM 10971 / SI)</name>
    <dbReference type="NCBI Taxonomy" id="370438"/>
    <lineage>
        <taxon>Bacteria</taxon>
        <taxon>Bacillati</taxon>
        <taxon>Bacillota</taxon>
        <taxon>Clostridia</taxon>
        <taxon>Eubacteriales</taxon>
        <taxon>Desulfotomaculaceae</taxon>
        <taxon>Pelotomaculum</taxon>
    </lineage>
</organism>
<dbReference type="EC" id="2.7.1.71" evidence="1"/>
<dbReference type="EMBL" id="AP009389">
    <property type="protein sequence ID" value="BAF59312.1"/>
    <property type="molecule type" value="Genomic_DNA"/>
</dbReference>
<dbReference type="SMR" id="A5D373"/>
<dbReference type="STRING" id="370438.PTH_1131"/>
<dbReference type="KEGG" id="pth:PTH_1131"/>
<dbReference type="eggNOG" id="COG0703">
    <property type="taxonomic scope" value="Bacteria"/>
</dbReference>
<dbReference type="HOGENOM" id="CLU_057607_4_0_9"/>
<dbReference type="UniPathway" id="UPA00053">
    <property type="reaction ID" value="UER00088"/>
</dbReference>
<dbReference type="Proteomes" id="UP000006556">
    <property type="component" value="Chromosome"/>
</dbReference>
<dbReference type="GO" id="GO:0005829">
    <property type="term" value="C:cytosol"/>
    <property type="evidence" value="ECO:0007669"/>
    <property type="project" value="TreeGrafter"/>
</dbReference>
<dbReference type="GO" id="GO:0005524">
    <property type="term" value="F:ATP binding"/>
    <property type="evidence" value="ECO:0007669"/>
    <property type="project" value="UniProtKB-UniRule"/>
</dbReference>
<dbReference type="GO" id="GO:0000287">
    <property type="term" value="F:magnesium ion binding"/>
    <property type="evidence" value="ECO:0007669"/>
    <property type="project" value="UniProtKB-UniRule"/>
</dbReference>
<dbReference type="GO" id="GO:0004765">
    <property type="term" value="F:shikimate kinase activity"/>
    <property type="evidence" value="ECO:0007669"/>
    <property type="project" value="UniProtKB-UniRule"/>
</dbReference>
<dbReference type="GO" id="GO:0008652">
    <property type="term" value="P:amino acid biosynthetic process"/>
    <property type="evidence" value="ECO:0007669"/>
    <property type="project" value="UniProtKB-KW"/>
</dbReference>
<dbReference type="GO" id="GO:0009073">
    <property type="term" value="P:aromatic amino acid family biosynthetic process"/>
    <property type="evidence" value="ECO:0007669"/>
    <property type="project" value="UniProtKB-KW"/>
</dbReference>
<dbReference type="GO" id="GO:0009423">
    <property type="term" value="P:chorismate biosynthetic process"/>
    <property type="evidence" value="ECO:0007669"/>
    <property type="project" value="UniProtKB-UniRule"/>
</dbReference>
<dbReference type="CDD" id="cd00464">
    <property type="entry name" value="SK"/>
    <property type="match status" value="1"/>
</dbReference>
<dbReference type="Gene3D" id="3.40.50.300">
    <property type="entry name" value="P-loop containing nucleotide triphosphate hydrolases"/>
    <property type="match status" value="1"/>
</dbReference>
<dbReference type="HAMAP" id="MF_00109">
    <property type="entry name" value="Shikimate_kinase"/>
    <property type="match status" value="1"/>
</dbReference>
<dbReference type="InterPro" id="IPR027417">
    <property type="entry name" value="P-loop_NTPase"/>
</dbReference>
<dbReference type="InterPro" id="IPR031322">
    <property type="entry name" value="Shikimate/glucono_kinase"/>
</dbReference>
<dbReference type="InterPro" id="IPR000623">
    <property type="entry name" value="Shikimate_kinase/TSH1"/>
</dbReference>
<dbReference type="InterPro" id="IPR023000">
    <property type="entry name" value="Shikimate_kinase_CS"/>
</dbReference>
<dbReference type="NCBIfam" id="NF010553">
    <property type="entry name" value="PRK13947.1"/>
    <property type="match status" value="1"/>
</dbReference>
<dbReference type="PANTHER" id="PTHR21087">
    <property type="entry name" value="SHIKIMATE KINASE"/>
    <property type="match status" value="1"/>
</dbReference>
<dbReference type="PANTHER" id="PTHR21087:SF16">
    <property type="entry name" value="SHIKIMATE KINASE 1, CHLOROPLASTIC"/>
    <property type="match status" value="1"/>
</dbReference>
<dbReference type="Pfam" id="PF01202">
    <property type="entry name" value="SKI"/>
    <property type="match status" value="1"/>
</dbReference>
<dbReference type="PRINTS" id="PR01100">
    <property type="entry name" value="SHIKIMTKNASE"/>
</dbReference>
<dbReference type="SUPFAM" id="SSF52540">
    <property type="entry name" value="P-loop containing nucleoside triphosphate hydrolases"/>
    <property type="match status" value="1"/>
</dbReference>
<dbReference type="PROSITE" id="PS01128">
    <property type="entry name" value="SHIKIMATE_KINASE"/>
    <property type="match status" value="1"/>
</dbReference>